<dbReference type="EC" id="2.5.1.31" evidence="1"/>
<dbReference type="EMBL" id="AE013218">
    <property type="protein sequence ID" value="AAM67789.1"/>
    <property type="molecule type" value="Genomic_DNA"/>
</dbReference>
<dbReference type="RefSeq" id="WP_011053756.1">
    <property type="nucleotide sequence ID" value="NC_004061.1"/>
</dbReference>
<dbReference type="SMR" id="Q8K9S6"/>
<dbReference type="STRING" id="198804.BUsg_230"/>
<dbReference type="GeneID" id="93003696"/>
<dbReference type="KEGG" id="bas:BUsg_230"/>
<dbReference type="eggNOG" id="COG0020">
    <property type="taxonomic scope" value="Bacteria"/>
</dbReference>
<dbReference type="HOGENOM" id="CLU_038505_1_1_6"/>
<dbReference type="Proteomes" id="UP000000416">
    <property type="component" value="Chromosome"/>
</dbReference>
<dbReference type="GO" id="GO:0005829">
    <property type="term" value="C:cytosol"/>
    <property type="evidence" value="ECO:0007669"/>
    <property type="project" value="TreeGrafter"/>
</dbReference>
<dbReference type="GO" id="GO:0008834">
    <property type="term" value="F:ditrans,polycis-undecaprenyl-diphosphate synthase [(2E,6E)-farnesyl-diphosphate specific] activity"/>
    <property type="evidence" value="ECO:0007669"/>
    <property type="project" value="UniProtKB-UniRule"/>
</dbReference>
<dbReference type="GO" id="GO:0000287">
    <property type="term" value="F:magnesium ion binding"/>
    <property type="evidence" value="ECO:0007669"/>
    <property type="project" value="UniProtKB-UniRule"/>
</dbReference>
<dbReference type="GO" id="GO:0071555">
    <property type="term" value="P:cell wall organization"/>
    <property type="evidence" value="ECO:0007669"/>
    <property type="project" value="UniProtKB-KW"/>
</dbReference>
<dbReference type="GO" id="GO:0009252">
    <property type="term" value="P:peptidoglycan biosynthetic process"/>
    <property type="evidence" value="ECO:0007669"/>
    <property type="project" value="UniProtKB-UniRule"/>
</dbReference>
<dbReference type="GO" id="GO:0016094">
    <property type="term" value="P:polyprenol biosynthetic process"/>
    <property type="evidence" value="ECO:0007669"/>
    <property type="project" value="TreeGrafter"/>
</dbReference>
<dbReference type="GO" id="GO:0008360">
    <property type="term" value="P:regulation of cell shape"/>
    <property type="evidence" value="ECO:0007669"/>
    <property type="project" value="UniProtKB-KW"/>
</dbReference>
<dbReference type="CDD" id="cd00475">
    <property type="entry name" value="Cis_IPPS"/>
    <property type="match status" value="1"/>
</dbReference>
<dbReference type="FunFam" id="3.40.1180.10:FF:000001">
    <property type="entry name" value="(2E,6E)-farnesyl-diphosphate-specific ditrans,polycis-undecaprenyl-diphosphate synthase"/>
    <property type="match status" value="1"/>
</dbReference>
<dbReference type="Gene3D" id="3.40.1180.10">
    <property type="entry name" value="Decaprenyl diphosphate synthase-like"/>
    <property type="match status" value="1"/>
</dbReference>
<dbReference type="HAMAP" id="MF_01139">
    <property type="entry name" value="ISPT"/>
    <property type="match status" value="1"/>
</dbReference>
<dbReference type="InterPro" id="IPR001441">
    <property type="entry name" value="UPP_synth-like"/>
</dbReference>
<dbReference type="InterPro" id="IPR018520">
    <property type="entry name" value="UPP_synth-like_CS"/>
</dbReference>
<dbReference type="InterPro" id="IPR036424">
    <property type="entry name" value="UPP_synth-like_sf"/>
</dbReference>
<dbReference type="NCBIfam" id="TIGR00055">
    <property type="entry name" value="uppS"/>
    <property type="match status" value="1"/>
</dbReference>
<dbReference type="PANTHER" id="PTHR10291:SF0">
    <property type="entry name" value="DEHYDRODOLICHYL DIPHOSPHATE SYNTHASE 2"/>
    <property type="match status" value="1"/>
</dbReference>
<dbReference type="PANTHER" id="PTHR10291">
    <property type="entry name" value="DEHYDRODOLICHYL DIPHOSPHATE SYNTHASE FAMILY MEMBER"/>
    <property type="match status" value="1"/>
</dbReference>
<dbReference type="Pfam" id="PF01255">
    <property type="entry name" value="Prenyltransf"/>
    <property type="match status" value="1"/>
</dbReference>
<dbReference type="SUPFAM" id="SSF64005">
    <property type="entry name" value="Undecaprenyl diphosphate synthase"/>
    <property type="match status" value="1"/>
</dbReference>
<dbReference type="PROSITE" id="PS01066">
    <property type="entry name" value="UPP_SYNTHASE"/>
    <property type="match status" value="1"/>
</dbReference>
<protein>
    <recommendedName>
        <fullName evidence="1">Ditrans,polycis-undecaprenyl-diphosphate synthase ((2E,6E)-farnesyl-diphosphate specific)</fullName>
        <ecNumber evidence="1">2.5.1.31</ecNumber>
    </recommendedName>
    <alternativeName>
        <fullName evidence="1">Ditrans,polycis-undecaprenylcistransferase</fullName>
    </alternativeName>
    <alternativeName>
        <fullName evidence="1">Undecaprenyl diphosphate synthase</fullName>
        <shortName evidence="1">UDS</shortName>
    </alternativeName>
    <alternativeName>
        <fullName evidence="1">Undecaprenyl pyrophosphate synthase</fullName>
        <shortName evidence="1">UPP synthase</shortName>
    </alternativeName>
</protein>
<organism>
    <name type="scientific">Buchnera aphidicola subsp. Schizaphis graminum (strain Sg)</name>
    <dbReference type="NCBI Taxonomy" id="198804"/>
    <lineage>
        <taxon>Bacteria</taxon>
        <taxon>Pseudomonadati</taxon>
        <taxon>Pseudomonadota</taxon>
        <taxon>Gammaproteobacteria</taxon>
        <taxon>Enterobacterales</taxon>
        <taxon>Erwiniaceae</taxon>
        <taxon>Buchnera</taxon>
    </lineage>
</organism>
<accession>Q8K9S6</accession>
<comment type="function">
    <text evidence="1">Catalyzes the sequential condensation of isopentenyl diphosphate (IPP) with (2E,6E)-farnesyl diphosphate (E,E-FPP) to yield (2Z,6Z,10Z,14Z,18Z,22Z,26Z,30Z,34E,38E)-undecaprenyl diphosphate (di-trans,octa-cis-UPP). UPP is the precursor of glycosyl carrier lipid in the biosynthesis of bacterial cell wall polysaccharide components such as peptidoglycan and lipopolysaccharide.</text>
</comment>
<comment type="catalytic activity">
    <reaction evidence="1">
        <text>8 isopentenyl diphosphate + (2E,6E)-farnesyl diphosphate = di-trans,octa-cis-undecaprenyl diphosphate + 8 diphosphate</text>
        <dbReference type="Rhea" id="RHEA:27551"/>
        <dbReference type="ChEBI" id="CHEBI:33019"/>
        <dbReference type="ChEBI" id="CHEBI:58405"/>
        <dbReference type="ChEBI" id="CHEBI:128769"/>
        <dbReference type="ChEBI" id="CHEBI:175763"/>
        <dbReference type="EC" id="2.5.1.31"/>
    </reaction>
</comment>
<comment type="cofactor">
    <cofactor evidence="1">
        <name>Mg(2+)</name>
        <dbReference type="ChEBI" id="CHEBI:18420"/>
    </cofactor>
    <text evidence="1">Binds 2 magnesium ions per subunit.</text>
</comment>
<comment type="subunit">
    <text evidence="1">Homodimer.</text>
</comment>
<comment type="similarity">
    <text evidence="1">Belongs to the UPP synthase family.</text>
</comment>
<keyword id="KW-0133">Cell shape</keyword>
<keyword id="KW-0961">Cell wall biogenesis/degradation</keyword>
<keyword id="KW-0460">Magnesium</keyword>
<keyword id="KW-0479">Metal-binding</keyword>
<keyword id="KW-0573">Peptidoglycan synthesis</keyword>
<keyword id="KW-0808">Transferase</keyword>
<evidence type="ECO:0000255" key="1">
    <source>
        <dbReference type="HAMAP-Rule" id="MF_01139"/>
    </source>
</evidence>
<gene>
    <name evidence="1" type="primary">uppS</name>
    <name type="ordered locus">BUsg_230</name>
</gene>
<sequence>MLYKSSLKNKKRIQKENLRHIAIIMDGNGRWAEKRGKIRTLGHKEGFKTARKIIKYAVENNIKILTLYVFSRENWRRPKLEITALMKLFFFALKSEIKNLNKYNIRLKIIGDTSPFNENLKNYIHKVEKQTFNNTGLILNIAANYSGRWDIIRGIKKIIKDVQKDVLDIDQIQERNFSQYLSTSELLPVDLVIRTGGEKRISNFLLWQIAYSELYFTDILWPDFNWRDFQHAIDYFFTRERRFGGISIS</sequence>
<reference key="1">
    <citation type="journal article" date="2002" name="Science">
        <title>50 million years of genomic stasis in endosymbiotic bacteria.</title>
        <authorList>
            <person name="Tamas I."/>
            <person name="Klasson L."/>
            <person name="Canbaeck B."/>
            <person name="Naeslund A.K."/>
            <person name="Eriksson A.-S."/>
            <person name="Wernegreen J.J."/>
            <person name="Sandstroem J.P."/>
            <person name="Moran N.A."/>
            <person name="Andersson S.G.E."/>
        </authorList>
    </citation>
    <scope>NUCLEOTIDE SEQUENCE [LARGE SCALE GENOMIC DNA]</scope>
    <source>
        <strain>Sg</strain>
    </source>
</reference>
<feature type="chain" id="PRO_0000123585" description="Ditrans,polycis-undecaprenyl-diphosphate synthase ((2E,6E)-farnesyl-diphosphate specific)">
    <location>
        <begin position="1"/>
        <end position="249"/>
    </location>
</feature>
<feature type="active site" evidence="1">
    <location>
        <position position="26"/>
    </location>
</feature>
<feature type="active site" description="Proton acceptor" evidence="1">
    <location>
        <position position="74"/>
    </location>
</feature>
<feature type="binding site" evidence="1">
    <location>
        <position position="26"/>
    </location>
    <ligand>
        <name>Mg(2+)</name>
        <dbReference type="ChEBI" id="CHEBI:18420"/>
    </ligand>
</feature>
<feature type="binding site" evidence="1">
    <location>
        <begin position="27"/>
        <end position="30"/>
    </location>
    <ligand>
        <name>substrate</name>
    </ligand>
</feature>
<feature type="binding site" evidence="1">
    <location>
        <position position="31"/>
    </location>
    <ligand>
        <name>substrate</name>
    </ligand>
</feature>
<feature type="binding site" evidence="1">
    <location>
        <position position="39"/>
    </location>
    <ligand>
        <name>substrate</name>
    </ligand>
</feature>
<feature type="binding site" evidence="1">
    <location>
        <position position="43"/>
    </location>
    <ligand>
        <name>substrate</name>
    </ligand>
</feature>
<feature type="binding site" evidence="1">
    <location>
        <begin position="71"/>
        <end position="73"/>
    </location>
    <ligand>
        <name>substrate</name>
    </ligand>
</feature>
<feature type="binding site" evidence="1">
    <location>
        <position position="75"/>
    </location>
    <ligand>
        <name>substrate</name>
    </ligand>
</feature>
<feature type="binding site" evidence="1">
    <location>
        <position position="77"/>
    </location>
    <ligand>
        <name>substrate</name>
    </ligand>
</feature>
<feature type="binding site" evidence="1">
    <location>
        <position position="194"/>
    </location>
    <ligand>
        <name>substrate</name>
    </ligand>
</feature>
<feature type="binding site" evidence="1">
    <location>
        <begin position="200"/>
        <end position="202"/>
    </location>
    <ligand>
        <name>substrate</name>
    </ligand>
</feature>
<feature type="binding site" evidence="1">
    <location>
        <position position="213"/>
    </location>
    <ligand>
        <name>Mg(2+)</name>
        <dbReference type="ChEBI" id="CHEBI:18420"/>
    </ligand>
</feature>
<proteinExistence type="inferred from homology"/>
<name>UPPS_BUCAP</name>